<comment type="function">
    <text evidence="1">Catalyzes oxygen-dependent 5-hydroxyuridine (ho5U) modification at position 34 in tRNAs.</text>
</comment>
<comment type="catalytic activity">
    <reaction evidence="1">
        <text>uridine(34) in tRNA + AH2 + O2 = 5-hydroxyuridine(34) in tRNA + A + H2O</text>
        <dbReference type="Rhea" id="RHEA:64224"/>
        <dbReference type="Rhea" id="RHEA-COMP:11727"/>
        <dbReference type="Rhea" id="RHEA-COMP:13381"/>
        <dbReference type="ChEBI" id="CHEBI:13193"/>
        <dbReference type="ChEBI" id="CHEBI:15377"/>
        <dbReference type="ChEBI" id="CHEBI:15379"/>
        <dbReference type="ChEBI" id="CHEBI:17499"/>
        <dbReference type="ChEBI" id="CHEBI:65315"/>
        <dbReference type="ChEBI" id="CHEBI:136877"/>
    </reaction>
</comment>
<comment type="similarity">
    <text evidence="1">Belongs to the TrhO family.</text>
</comment>
<proteinExistence type="inferred from homology"/>
<accession>Q7VBJ1</accession>
<keyword id="KW-0560">Oxidoreductase</keyword>
<keyword id="KW-1185">Reference proteome</keyword>
<keyword id="KW-0819">tRNA processing</keyword>
<feature type="chain" id="PRO_0000161494" description="tRNA uridine(34) hydroxylase">
    <location>
        <begin position="1"/>
        <end position="321"/>
    </location>
</feature>
<feature type="domain" description="Rhodanese" evidence="1">
    <location>
        <begin position="135"/>
        <end position="233"/>
    </location>
</feature>
<feature type="active site" description="Cysteine persulfide intermediate" evidence="1">
    <location>
        <position position="193"/>
    </location>
</feature>
<dbReference type="EC" id="1.14.-.-" evidence="1"/>
<dbReference type="EMBL" id="AE017126">
    <property type="protein sequence ID" value="AAQ00146.1"/>
    <property type="molecule type" value="Genomic_DNA"/>
</dbReference>
<dbReference type="RefSeq" id="NP_875493.1">
    <property type="nucleotide sequence ID" value="NC_005042.1"/>
</dbReference>
<dbReference type="RefSeq" id="WP_011125253.1">
    <property type="nucleotide sequence ID" value="NC_005042.1"/>
</dbReference>
<dbReference type="SMR" id="Q7VBJ1"/>
<dbReference type="STRING" id="167539.Pro_1101"/>
<dbReference type="EnsemblBacteria" id="AAQ00146">
    <property type="protein sequence ID" value="AAQ00146"/>
    <property type="gene ID" value="Pro_1101"/>
</dbReference>
<dbReference type="KEGG" id="pma:Pro_1101"/>
<dbReference type="PATRIC" id="fig|167539.5.peg.1151"/>
<dbReference type="eggNOG" id="COG1054">
    <property type="taxonomic scope" value="Bacteria"/>
</dbReference>
<dbReference type="HOGENOM" id="CLU_038878_0_0_3"/>
<dbReference type="OrthoDB" id="9778326at2"/>
<dbReference type="Proteomes" id="UP000001420">
    <property type="component" value="Chromosome"/>
</dbReference>
<dbReference type="GO" id="GO:0016705">
    <property type="term" value="F:oxidoreductase activity, acting on paired donors, with incorporation or reduction of molecular oxygen"/>
    <property type="evidence" value="ECO:0007669"/>
    <property type="project" value="UniProtKB-UniRule"/>
</dbReference>
<dbReference type="GO" id="GO:0006400">
    <property type="term" value="P:tRNA modification"/>
    <property type="evidence" value="ECO:0007669"/>
    <property type="project" value="UniProtKB-UniRule"/>
</dbReference>
<dbReference type="CDD" id="cd01518">
    <property type="entry name" value="RHOD_YceA"/>
    <property type="match status" value="1"/>
</dbReference>
<dbReference type="Gene3D" id="3.30.70.100">
    <property type="match status" value="1"/>
</dbReference>
<dbReference type="Gene3D" id="3.40.250.10">
    <property type="entry name" value="Rhodanese-like domain"/>
    <property type="match status" value="1"/>
</dbReference>
<dbReference type="HAMAP" id="MF_00469">
    <property type="entry name" value="TrhO"/>
    <property type="match status" value="1"/>
</dbReference>
<dbReference type="InterPro" id="IPR001763">
    <property type="entry name" value="Rhodanese-like_dom"/>
</dbReference>
<dbReference type="InterPro" id="IPR036873">
    <property type="entry name" value="Rhodanese-like_dom_sf"/>
</dbReference>
<dbReference type="InterPro" id="IPR020936">
    <property type="entry name" value="TrhO"/>
</dbReference>
<dbReference type="InterPro" id="IPR040503">
    <property type="entry name" value="TRHO_N"/>
</dbReference>
<dbReference type="NCBIfam" id="NF001136">
    <property type="entry name" value="PRK00142.1-4"/>
    <property type="match status" value="1"/>
</dbReference>
<dbReference type="PANTHER" id="PTHR43268:SF3">
    <property type="entry name" value="RHODANESE-LIKE DOMAIN-CONTAINING PROTEIN 7-RELATED"/>
    <property type="match status" value="1"/>
</dbReference>
<dbReference type="PANTHER" id="PTHR43268">
    <property type="entry name" value="THIOSULFATE SULFURTRANSFERASE/RHODANESE-LIKE DOMAIN-CONTAINING PROTEIN 2"/>
    <property type="match status" value="1"/>
</dbReference>
<dbReference type="Pfam" id="PF00581">
    <property type="entry name" value="Rhodanese"/>
    <property type="match status" value="1"/>
</dbReference>
<dbReference type="Pfam" id="PF17773">
    <property type="entry name" value="UPF0176_N"/>
    <property type="match status" value="1"/>
</dbReference>
<dbReference type="SMART" id="SM00450">
    <property type="entry name" value="RHOD"/>
    <property type="match status" value="1"/>
</dbReference>
<dbReference type="SUPFAM" id="SSF52821">
    <property type="entry name" value="Rhodanese/Cell cycle control phosphatase"/>
    <property type="match status" value="1"/>
</dbReference>
<dbReference type="PROSITE" id="PS50206">
    <property type="entry name" value="RHODANESE_3"/>
    <property type="match status" value="1"/>
</dbReference>
<reference key="1">
    <citation type="journal article" date="2003" name="Proc. Natl. Acad. Sci. U.S.A.">
        <title>Genome sequence of the cyanobacterium Prochlorococcus marinus SS120, a nearly minimal oxyphototrophic genome.</title>
        <authorList>
            <person name="Dufresne A."/>
            <person name="Salanoubat M."/>
            <person name="Partensky F."/>
            <person name="Artiguenave F."/>
            <person name="Axmann I.M."/>
            <person name="Barbe V."/>
            <person name="Duprat S."/>
            <person name="Galperin M.Y."/>
            <person name="Koonin E.V."/>
            <person name="Le Gall F."/>
            <person name="Makarova K.S."/>
            <person name="Ostrowski M."/>
            <person name="Oztas S."/>
            <person name="Robert C."/>
            <person name="Rogozin I.B."/>
            <person name="Scanlan D.J."/>
            <person name="Tandeau de Marsac N."/>
            <person name="Weissenbach J."/>
            <person name="Wincker P."/>
            <person name="Wolf Y.I."/>
            <person name="Hess W.R."/>
        </authorList>
    </citation>
    <scope>NUCLEOTIDE SEQUENCE [LARGE SCALE GENOMIC DNA]</scope>
    <source>
        <strain>SARG / CCMP1375 / SS120</strain>
    </source>
</reference>
<name>TRHO_PROMA</name>
<evidence type="ECO:0000255" key="1">
    <source>
        <dbReference type="HAMAP-Rule" id="MF_00469"/>
    </source>
</evidence>
<organism>
    <name type="scientific">Prochlorococcus marinus (strain SARG / CCMP1375 / SS120)</name>
    <dbReference type="NCBI Taxonomy" id="167539"/>
    <lineage>
        <taxon>Bacteria</taxon>
        <taxon>Bacillati</taxon>
        <taxon>Cyanobacteriota</taxon>
        <taxon>Cyanophyceae</taxon>
        <taxon>Synechococcales</taxon>
        <taxon>Prochlorococcaceae</taxon>
        <taxon>Prochlorococcus</taxon>
    </lineage>
</organism>
<gene>
    <name evidence="1" type="primary">trhO</name>
    <name type="ordered locus">Pro_1101</name>
</gene>
<sequence>MINSFESQKVDNDYKIAAFYSFSPIAEKVITTFLSKLRIIAEKHNVRGTVLVALEGINGTICGPVEGVTAMQKQLDSLDLETPLEIKYSYTSRQAFRRFKARRKNEIVTMGVENVDPCKTTGKYVEPEDWNAFLDDPLTLVIDTRNEYEISVGSFDGAVNPRTDSFREFPEWVDKKLHSLLKKKSFKKIALFCTGGIRCEKASALLLREGFPEVHHLHGGILRYLEEVPENESRWNGECFVFDQRVALNHKLMPGVYKLCFACGMPLSPQDQNGKYYIPSIQCHHCVDLFSDDDRERFRERQRHIARLGERFPGNSIWPSA</sequence>
<protein>
    <recommendedName>
        <fullName evidence="1">tRNA uridine(34) hydroxylase</fullName>
        <ecNumber evidence="1">1.14.-.-</ecNumber>
    </recommendedName>
    <alternativeName>
        <fullName evidence="1">tRNA hydroxylation protein O</fullName>
    </alternativeName>
</protein>